<proteinExistence type="inferred from homology"/>
<dbReference type="EMBL" id="CP001157">
    <property type="protein sequence ID" value="ACO76271.1"/>
    <property type="molecule type" value="Genomic_DNA"/>
</dbReference>
<dbReference type="RefSeq" id="WP_012698699.1">
    <property type="nucleotide sequence ID" value="NC_012560.1"/>
</dbReference>
<dbReference type="SMR" id="C1DFU4"/>
<dbReference type="STRING" id="322710.Avin_00030"/>
<dbReference type="EnsemblBacteria" id="ACO76271">
    <property type="protein sequence ID" value="ACO76271"/>
    <property type="gene ID" value="Avin_00030"/>
</dbReference>
<dbReference type="GeneID" id="88183481"/>
<dbReference type="KEGG" id="avn:Avin_00030"/>
<dbReference type="eggNOG" id="COG1195">
    <property type="taxonomic scope" value="Bacteria"/>
</dbReference>
<dbReference type="HOGENOM" id="CLU_040267_0_0_6"/>
<dbReference type="OrthoDB" id="9803889at2"/>
<dbReference type="Proteomes" id="UP000002424">
    <property type="component" value="Chromosome"/>
</dbReference>
<dbReference type="GO" id="GO:0005737">
    <property type="term" value="C:cytoplasm"/>
    <property type="evidence" value="ECO:0007669"/>
    <property type="project" value="UniProtKB-SubCell"/>
</dbReference>
<dbReference type="GO" id="GO:0005524">
    <property type="term" value="F:ATP binding"/>
    <property type="evidence" value="ECO:0007669"/>
    <property type="project" value="UniProtKB-UniRule"/>
</dbReference>
<dbReference type="GO" id="GO:0003697">
    <property type="term" value="F:single-stranded DNA binding"/>
    <property type="evidence" value="ECO:0007669"/>
    <property type="project" value="UniProtKB-UniRule"/>
</dbReference>
<dbReference type="GO" id="GO:0006260">
    <property type="term" value="P:DNA replication"/>
    <property type="evidence" value="ECO:0007669"/>
    <property type="project" value="UniProtKB-UniRule"/>
</dbReference>
<dbReference type="GO" id="GO:0000731">
    <property type="term" value="P:DNA synthesis involved in DNA repair"/>
    <property type="evidence" value="ECO:0007669"/>
    <property type="project" value="TreeGrafter"/>
</dbReference>
<dbReference type="GO" id="GO:0006302">
    <property type="term" value="P:double-strand break repair"/>
    <property type="evidence" value="ECO:0007669"/>
    <property type="project" value="TreeGrafter"/>
</dbReference>
<dbReference type="GO" id="GO:0009432">
    <property type="term" value="P:SOS response"/>
    <property type="evidence" value="ECO:0007669"/>
    <property type="project" value="UniProtKB-UniRule"/>
</dbReference>
<dbReference type="Gene3D" id="3.40.50.300">
    <property type="entry name" value="P-loop containing nucleotide triphosphate hydrolases"/>
    <property type="match status" value="1"/>
</dbReference>
<dbReference type="Gene3D" id="1.20.1050.90">
    <property type="entry name" value="RecF/RecN/SMC, N-terminal domain"/>
    <property type="match status" value="1"/>
</dbReference>
<dbReference type="HAMAP" id="MF_00365">
    <property type="entry name" value="RecF"/>
    <property type="match status" value="1"/>
</dbReference>
<dbReference type="InterPro" id="IPR001238">
    <property type="entry name" value="DNA-binding_RecF"/>
</dbReference>
<dbReference type="InterPro" id="IPR018078">
    <property type="entry name" value="DNA-binding_RecF_CS"/>
</dbReference>
<dbReference type="InterPro" id="IPR027417">
    <property type="entry name" value="P-loop_NTPase"/>
</dbReference>
<dbReference type="InterPro" id="IPR003395">
    <property type="entry name" value="RecF/RecN/SMC_N"/>
</dbReference>
<dbReference type="InterPro" id="IPR042174">
    <property type="entry name" value="RecF_2"/>
</dbReference>
<dbReference type="NCBIfam" id="TIGR00611">
    <property type="entry name" value="recf"/>
    <property type="match status" value="1"/>
</dbReference>
<dbReference type="PANTHER" id="PTHR32182">
    <property type="entry name" value="DNA REPLICATION AND REPAIR PROTEIN RECF"/>
    <property type="match status" value="1"/>
</dbReference>
<dbReference type="PANTHER" id="PTHR32182:SF0">
    <property type="entry name" value="DNA REPLICATION AND REPAIR PROTEIN RECF"/>
    <property type="match status" value="1"/>
</dbReference>
<dbReference type="Pfam" id="PF02463">
    <property type="entry name" value="SMC_N"/>
    <property type="match status" value="1"/>
</dbReference>
<dbReference type="SUPFAM" id="SSF52540">
    <property type="entry name" value="P-loop containing nucleoside triphosphate hydrolases"/>
    <property type="match status" value="1"/>
</dbReference>
<dbReference type="PROSITE" id="PS00617">
    <property type="entry name" value="RECF_1"/>
    <property type="match status" value="1"/>
</dbReference>
<dbReference type="PROSITE" id="PS00618">
    <property type="entry name" value="RECF_2"/>
    <property type="match status" value="1"/>
</dbReference>
<gene>
    <name evidence="1" type="primary">recF</name>
    <name type="ordered locus">Avin_00030</name>
</gene>
<reference key="1">
    <citation type="journal article" date="2009" name="J. Bacteriol.">
        <title>Genome sequence of Azotobacter vinelandii, an obligate aerobe specialized to support diverse anaerobic metabolic processes.</title>
        <authorList>
            <person name="Setubal J.C."/>
            <person name="Dos Santos P."/>
            <person name="Goldman B.S."/>
            <person name="Ertesvaag H."/>
            <person name="Espin G."/>
            <person name="Rubio L.M."/>
            <person name="Valla S."/>
            <person name="Almeida N.F."/>
            <person name="Balasubramanian D."/>
            <person name="Cromes L."/>
            <person name="Curatti L."/>
            <person name="Du Z."/>
            <person name="Godsy E."/>
            <person name="Goodner B."/>
            <person name="Hellner-Burris K."/>
            <person name="Hernandez J.A."/>
            <person name="Houmiel K."/>
            <person name="Imperial J."/>
            <person name="Kennedy C."/>
            <person name="Larson T.J."/>
            <person name="Latreille P."/>
            <person name="Ligon L.S."/>
            <person name="Lu J."/>
            <person name="Maerk M."/>
            <person name="Miller N.M."/>
            <person name="Norton S."/>
            <person name="O'Carroll I.P."/>
            <person name="Paulsen I."/>
            <person name="Raulfs E.C."/>
            <person name="Roemer R."/>
            <person name="Rosser J."/>
            <person name="Segura D."/>
            <person name="Slater S."/>
            <person name="Stricklin S.L."/>
            <person name="Studholme D.J."/>
            <person name="Sun J."/>
            <person name="Viana C.J."/>
            <person name="Wallin E."/>
            <person name="Wang B."/>
            <person name="Wheeler C."/>
            <person name="Zhu H."/>
            <person name="Dean D.R."/>
            <person name="Dixon R."/>
            <person name="Wood D."/>
        </authorList>
    </citation>
    <scope>NUCLEOTIDE SEQUENCE [LARGE SCALE GENOMIC DNA]</scope>
    <source>
        <strain>DJ / ATCC BAA-1303</strain>
    </source>
</reference>
<keyword id="KW-0067">ATP-binding</keyword>
<keyword id="KW-0963">Cytoplasm</keyword>
<keyword id="KW-0227">DNA damage</keyword>
<keyword id="KW-0234">DNA repair</keyword>
<keyword id="KW-0235">DNA replication</keyword>
<keyword id="KW-0238">DNA-binding</keyword>
<keyword id="KW-0547">Nucleotide-binding</keyword>
<keyword id="KW-0742">SOS response</keyword>
<sequence length="365" mass="41641">MSLGRVTVTAVRNLHPVTLNPSPRINILYGPNGSGKTSLLEAIHLLGLARSFRSQRLSPVIQHEQPACTVFGQVLWNDGRVRNLGVARNRLGELQIRIDGQNVRSAAQLAESLPLQLINPDSFRLLEGAPKVRRQFLDWGVFHVEQRFLPAWHRLQTALRQRNSWLRHGRIDPVSQAAWDRELCLASEEIDSYRRSYIQVLKPVFESVLHELVELDGLTLSYYRGWDRERSLGEVLAASLPRDQQLGHTQAGPQRADLRLRLAAHNAADLLSRGQQKLVVCALKIAQGHLVDRARRECIYLVDDLPSELDEQHRRALCRLLEELHCQVFITCVDLEALREGWRTDTPVALFHVEQGRITQTHDRE</sequence>
<protein>
    <recommendedName>
        <fullName evidence="1">DNA replication and repair protein RecF</fullName>
    </recommendedName>
</protein>
<comment type="function">
    <text evidence="1">The RecF protein is involved in DNA metabolism; it is required for DNA replication and normal SOS inducibility. RecF binds preferentially to single-stranded, linear DNA. It also seems to bind ATP.</text>
</comment>
<comment type="subcellular location">
    <subcellularLocation>
        <location evidence="1">Cytoplasm</location>
    </subcellularLocation>
</comment>
<comment type="similarity">
    <text evidence="1">Belongs to the RecF family.</text>
</comment>
<feature type="chain" id="PRO_1000205471" description="DNA replication and repair protein RecF">
    <location>
        <begin position="1"/>
        <end position="365"/>
    </location>
</feature>
<feature type="binding site" evidence="1">
    <location>
        <begin position="30"/>
        <end position="37"/>
    </location>
    <ligand>
        <name>ATP</name>
        <dbReference type="ChEBI" id="CHEBI:30616"/>
    </ligand>
</feature>
<accession>C1DFU4</accession>
<evidence type="ECO:0000255" key="1">
    <source>
        <dbReference type="HAMAP-Rule" id="MF_00365"/>
    </source>
</evidence>
<name>RECF_AZOVD</name>
<organism>
    <name type="scientific">Azotobacter vinelandii (strain DJ / ATCC BAA-1303)</name>
    <dbReference type="NCBI Taxonomy" id="322710"/>
    <lineage>
        <taxon>Bacteria</taxon>
        <taxon>Pseudomonadati</taxon>
        <taxon>Pseudomonadota</taxon>
        <taxon>Gammaproteobacteria</taxon>
        <taxon>Pseudomonadales</taxon>
        <taxon>Pseudomonadaceae</taxon>
        <taxon>Azotobacter</taxon>
    </lineage>
</organism>